<protein>
    <recommendedName>
        <fullName evidence="3">2-(3-amino-3-carboxypropyl)histidine synthase subunit 2</fullName>
    </recommendedName>
    <alternativeName>
        <fullName>Diphthamide biosynthesis protein 2</fullName>
    </alternativeName>
    <alternativeName>
        <fullName evidence="3">Diphtheria toxin resistance protein 2</fullName>
    </alternativeName>
    <alternativeName>
        <fullName evidence="3">S-adenosyl-L-methionine:L-histidine 3-amino-3-carboxypropyltransferase 2</fullName>
    </alternativeName>
</protein>
<accession>Q4WN99</accession>
<reference key="1">
    <citation type="journal article" date="2005" name="Nature">
        <title>Genomic sequence of the pathogenic and allergenic filamentous fungus Aspergillus fumigatus.</title>
        <authorList>
            <person name="Nierman W.C."/>
            <person name="Pain A."/>
            <person name="Anderson M.J."/>
            <person name="Wortman J.R."/>
            <person name="Kim H.S."/>
            <person name="Arroyo J."/>
            <person name="Berriman M."/>
            <person name="Abe K."/>
            <person name="Archer D.B."/>
            <person name="Bermejo C."/>
            <person name="Bennett J.W."/>
            <person name="Bowyer P."/>
            <person name="Chen D."/>
            <person name="Collins M."/>
            <person name="Coulsen R."/>
            <person name="Davies R."/>
            <person name="Dyer P.S."/>
            <person name="Farman M.L."/>
            <person name="Fedorova N."/>
            <person name="Fedorova N.D."/>
            <person name="Feldblyum T.V."/>
            <person name="Fischer R."/>
            <person name="Fosker N."/>
            <person name="Fraser A."/>
            <person name="Garcia J.L."/>
            <person name="Garcia M.J."/>
            <person name="Goble A."/>
            <person name="Goldman G.H."/>
            <person name="Gomi K."/>
            <person name="Griffith-Jones S."/>
            <person name="Gwilliam R."/>
            <person name="Haas B.J."/>
            <person name="Haas H."/>
            <person name="Harris D.E."/>
            <person name="Horiuchi H."/>
            <person name="Huang J."/>
            <person name="Humphray S."/>
            <person name="Jimenez J."/>
            <person name="Keller N."/>
            <person name="Khouri H."/>
            <person name="Kitamoto K."/>
            <person name="Kobayashi T."/>
            <person name="Konzack S."/>
            <person name="Kulkarni R."/>
            <person name="Kumagai T."/>
            <person name="Lafton A."/>
            <person name="Latge J.-P."/>
            <person name="Li W."/>
            <person name="Lord A."/>
            <person name="Lu C."/>
            <person name="Majoros W.H."/>
            <person name="May G.S."/>
            <person name="Miller B.L."/>
            <person name="Mohamoud Y."/>
            <person name="Molina M."/>
            <person name="Monod M."/>
            <person name="Mouyna I."/>
            <person name="Mulligan S."/>
            <person name="Murphy L.D."/>
            <person name="O'Neil S."/>
            <person name="Paulsen I."/>
            <person name="Penalva M.A."/>
            <person name="Pertea M."/>
            <person name="Price C."/>
            <person name="Pritchard B.L."/>
            <person name="Quail M.A."/>
            <person name="Rabbinowitsch E."/>
            <person name="Rawlins N."/>
            <person name="Rajandream M.A."/>
            <person name="Reichard U."/>
            <person name="Renauld H."/>
            <person name="Robson G.D."/>
            <person name="Rodriguez de Cordoba S."/>
            <person name="Rodriguez-Pena J.M."/>
            <person name="Ronning C.M."/>
            <person name="Rutter S."/>
            <person name="Salzberg S.L."/>
            <person name="Sanchez M."/>
            <person name="Sanchez-Ferrero J.C."/>
            <person name="Saunders D."/>
            <person name="Seeger K."/>
            <person name="Squares R."/>
            <person name="Squares S."/>
            <person name="Takeuchi M."/>
            <person name="Tekaia F."/>
            <person name="Turner G."/>
            <person name="Vazquez de Aldana C.R."/>
            <person name="Weidman J."/>
            <person name="White O."/>
            <person name="Woodward J.R."/>
            <person name="Yu J.-H."/>
            <person name="Fraser C.M."/>
            <person name="Galagan J.E."/>
            <person name="Asai K."/>
            <person name="Machida M."/>
            <person name="Hall N."/>
            <person name="Barrell B.G."/>
            <person name="Denning D.W."/>
        </authorList>
    </citation>
    <scope>NUCLEOTIDE SEQUENCE [LARGE SCALE GENOMIC DNA]</scope>
    <source>
        <strain>ATCC MYA-4609 / CBS 101355 / FGSC A1100 / Af293</strain>
    </source>
</reference>
<dbReference type="EMBL" id="AAHF01000006">
    <property type="protein sequence ID" value="EAL88565.1"/>
    <property type="molecule type" value="Genomic_DNA"/>
</dbReference>
<dbReference type="RefSeq" id="XP_750603.1">
    <property type="nucleotide sequence ID" value="XM_745510.1"/>
</dbReference>
<dbReference type="SMR" id="Q4WN99"/>
<dbReference type="FunCoup" id="Q4WN99">
    <property type="interactions" value="960"/>
</dbReference>
<dbReference type="STRING" id="330879.Q4WN99"/>
<dbReference type="EnsemblFungi" id="EAL88565">
    <property type="protein sequence ID" value="EAL88565"/>
    <property type="gene ID" value="AFUA_6G07100"/>
</dbReference>
<dbReference type="GeneID" id="3508816"/>
<dbReference type="KEGG" id="afm:AFUA_6G07100"/>
<dbReference type="VEuPathDB" id="FungiDB:Afu6g07100"/>
<dbReference type="eggNOG" id="KOG2648">
    <property type="taxonomic scope" value="Eukaryota"/>
</dbReference>
<dbReference type="HOGENOM" id="CLU_015210_1_1_1"/>
<dbReference type="InParanoid" id="Q4WN99"/>
<dbReference type="OMA" id="QIWNENH"/>
<dbReference type="OrthoDB" id="449241at2759"/>
<dbReference type="UniPathway" id="UPA00559"/>
<dbReference type="Proteomes" id="UP000002530">
    <property type="component" value="Chromosome 6"/>
</dbReference>
<dbReference type="GO" id="GO:0120513">
    <property type="term" value="C:2-(3-amino-3-carboxypropyl)histidine synthase complex"/>
    <property type="evidence" value="ECO:0000250"/>
    <property type="project" value="UniProtKB"/>
</dbReference>
<dbReference type="GO" id="GO:0005737">
    <property type="term" value="C:cytoplasm"/>
    <property type="evidence" value="ECO:0007669"/>
    <property type="project" value="UniProtKB-SubCell"/>
</dbReference>
<dbReference type="GO" id="GO:0090560">
    <property type="term" value="F:2-(3-amino-3-carboxypropyl)histidine synthase activity"/>
    <property type="evidence" value="ECO:0007669"/>
    <property type="project" value="UniProtKB-EC"/>
</dbReference>
<dbReference type="GO" id="GO:0051539">
    <property type="term" value="F:4 iron, 4 sulfur cluster binding"/>
    <property type="evidence" value="ECO:0000250"/>
    <property type="project" value="UniProtKB"/>
</dbReference>
<dbReference type="GO" id="GO:0046872">
    <property type="term" value="F:metal ion binding"/>
    <property type="evidence" value="ECO:0007669"/>
    <property type="project" value="UniProtKB-KW"/>
</dbReference>
<dbReference type="GO" id="GO:0017183">
    <property type="term" value="P:protein histidyl modification to diphthamide"/>
    <property type="evidence" value="ECO:0000250"/>
    <property type="project" value="UniProtKB"/>
</dbReference>
<dbReference type="FunFam" id="3.40.50.11860:FF:000001">
    <property type="entry name" value="2-(3-amino-3-carboxypropyl)histidine synthase subunit 2"/>
    <property type="match status" value="1"/>
</dbReference>
<dbReference type="Gene3D" id="3.40.50.11840">
    <property type="entry name" value="Diphthamide synthesis DPH1/DPH2 domain 1"/>
    <property type="match status" value="1"/>
</dbReference>
<dbReference type="Gene3D" id="3.40.50.11860">
    <property type="entry name" value="Diphthamide synthesis DPH1/DPH2 domain 3"/>
    <property type="match status" value="1"/>
</dbReference>
<dbReference type="InterPro" id="IPR010014">
    <property type="entry name" value="DHP2"/>
</dbReference>
<dbReference type="InterPro" id="IPR016435">
    <property type="entry name" value="DPH1/DPH2"/>
</dbReference>
<dbReference type="InterPro" id="IPR042263">
    <property type="entry name" value="DPH1/DPH2_1"/>
</dbReference>
<dbReference type="InterPro" id="IPR042265">
    <property type="entry name" value="DPH1/DPH2_3"/>
</dbReference>
<dbReference type="NCBIfam" id="TIGR00322">
    <property type="entry name" value="diphth2_R"/>
    <property type="match status" value="1"/>
</dbReference>
<dbReference type="NCBIfam" id="TIGR00272">
    <property type="entry name" value="DPH2"/>
    <property type="match status" value="1"/>
</dbReference>
<dbReference type="PANTHER" id="PTHR10762:SF2">
    <property type="entry name" value="2-(3-AMINO-3-CARBOXYPROPYL)HISTIDINE SYNTHASE SUBUNIT 2"/>
    <property type="match status" value="1"/>
</dbReference>
<dbReference type="PANTHER" id="PTHR10762">
    <property type="entry name" value="DIPHTHAMIDE BIOSYNTHESIS PROTEIN"/>
    <property type="match status" value="1"/>
</dbReference>
<dbReference type="Pfam" id="PF01866">
    <property type="entry name" value="Diphthamide_syn"/>
    <property type="match status" value="1"/>
</dbReference>
<dbReference type="SFLD" id="SFLDG01121">
    <property type="entry name" value="Diphthamide_biosynthesis"/>
    <property type="match status" value="1"/>
</dbReference>
<dbReference type="SFLD" id="SFLDF00408">
    <property type="entry name" value="Diphthamide_biosynthesis_famil"/>
    <property type="match status" value="1"/>
</dbReference>
<dbReference type="SFLD" id="SFLDS00032">
    <property type="entry name" value="Radical_SAM_3-amino-3-carboxyp"/>
    <property type="match status" value="1"/>
</dbReference>
<feature type="chain" id="PRO_0000083383" description="2-(3-amino-3-carboxypropyl)histidine synthase subunit 2">
    <location>
        <begin position="1"/>
        <end position="565"/>
    </location>
</feature>
<feature type="region of interest" description="Disordered" evidence="2">
    <location>
        <begin position="424"/>
        <end position="458"/>
    </location>
</feature>
<feature type="region of interest" description="Disordered" evidence="2">
    <location>
        <begin position="464"/>
        <end position="483"/>
    </location>
</feature>
<feature type="binding site" evidence="1">
    <location>
        <position position="139"/>
    </location>
    <ligand>
        <name>[4Fe-4S] cluster</name>
        <dbReference type="ChEBI" id="CHEBI:49883"/>
    </ligand>
</feature>
<feature type="binding site" evidence="1">
    <location>
        <position position="160"/>
    </location>
    <ligand>
        <name>[4Fe-4S] cluster</name>
        <dbReference type="ChEBI" id="CHEBI:49883"/>
    </ligand>
</feature>
<feature type="binding site" evidence="1">
    <location>
        <position position="377"/>
    </location>
    <ligand>
        <name>[4Fe-4S] cluster</name>
        <dbReference type="ChEBI" id="CHEBI:49883"/>
    </ligand>
</feature>
<organism>
    <name type="scientific">Aspergillus fumigatus (strain ATCC MYA-4609 / CBS 101355 / FGSC A1100 / Af293)</name>
    <name type="common">Neosartorya fumigata</name>
    <dbReference type="NCBI Taxonomy" id="330879"/>
    <lineage>
        <taxon>Eukaryota</taxon>
        <taxon>Fungi</taxon>
        <taxon>Dikarya</taxon>
        <taxon>Ascomycota</taxon>
        <taxon>Pezizomycotina</taxon>
        <taxon>Eurotiomycetes</taxon>
        <taxon>Eurotiomycetidae</taxon>
        <taxon>Eurotiales</taxon>
        <taxon>Aspergillaceae</taxon>
        <taxon>Aspergillus</taxon>
        <taxon>Aspergillus subgen. Fumigati</taxon>
    </lineage>
</organism>
<comment type="function">
    <text evidence="1">Required for the first step of diphthamide biosynthesis, a post-translational modification of histidine which occurs in elongation factor 2. Dph1 and dph2 transfer a 3-amino-3-carboxypropyl (ACP) group from S-adenosyl-L-methionine (SAM) to a histidine residue, the reaction is assisted by a reduction system comprising dph3 and a NADH-dependent reductase, predominantly cbr1 (By similarity). Facilitates the reduction of the catalytic iron-sulfur cluster found in the dph1 subunit (By similarity).</text>
</comment>
<comment type="cofactor">
    <cofactor evidence="1">
        <name>[4Fe-4S] cluster</name>
        <dbReference type="ChEBI" id="CHEBI:49883"/>
    </cofactor>
    <text evidence="1">Binds 1 [4Fe-4S] cluster per subunit. The cluster facilitates the reduction of the catalytic iron-sulfur cluster in the dph1 subunit.</text>
</comment>
<comment type="pathway">
    <text evidence="1">Protein modification; peptidyl-diphthamide biosynthesis.</text>
</comment>
<comment type="subunit">
    <text evidence="1">Component of the 2-(3-amino-3-carboxypropyl)histidine synthase complex composed of dph1, dph2, dph3 and a NADH-dependent reductase, predominantly cbr1.</text>
</comment>
<comment type="subcellular location">
    <subcellularLocation>
        <location evidence="1">Cytoplasm</location>
    </subcellularLocation>
</comment>
<comment type="similarity">
    <text evidence="3">Belongs to the DPH1/DPH2 family. DPH2 subfamily.</text>
</comment>
<evidence type="ECO:0000250" key="1">
    <source>
        <dbReference type="UniProtKB" id="P32461"/>
    </source>
</evidence>
<evidence type="ECO:0000256" key="2">
    <source>
        <dbReference type="SAM" id="MobiDB-lite"/>
    </source>
</evidence>
<evidence type="ECO:0000305" key="3"/>
<name>DPH2_ASPFU</name>
<keyword id="KW-0963">Cytoplasm</keyword>
<keyword id="KW-0408">Iron</keyword>
<keyword id="KW-0411">Iron-sulfur</keyword>
<keyword id="KW-0479">Metal-binding</keyword>
<keyword id="KW-1185">Reference proteome</keyword>
<gene>
    <name type="primary">dph2</name>
    <name type="ORF">AFUA_6G07100</name>
</gene>
<sequence length="565" mass="62076">MATEMQAAPVLSTPDSLILEATEPVARQNATRTLSDEELSITYDIERTLQEIRQARYKRIALQFPDDMLPDAPRVFQLLSRGLACRDVDKITVEKNGNGTGGVESEKLAQDVSQLSVDDKPEPEPKLYILADTSYGTCCVDEVAAEHVNADVVVHYGRSCLSPTARLPVIYVFTHKELPIEPVIQAFKATYPDQATKIILAADVTYCDHIPAVYARLMEEGYTNLYATELIHCPSSAIPNRTVPDSVRENPDTLSEWQLFHISDPPTALLLTLASRVAAIHIYPTTDAPSDNVKPLPVSTSAALGRRYAILTRLSTVPIFGILINTLSVKNYLHIVEHVKQKIADAGKKSYMFVVGKLNAAKVANFSEIGGWVVIGCWESSLVDSKDFWKPVITPFELELALKGDHERVWTGAWQSDFQSILDQPAEEAQTADHEESPNDDDDMSEPESAPPEFDLRTGRYVSHTRPMRNPAPRVSAQSDDAVSAASGPAAARALARRAKGELAMIGGTVSPGAEYLRSQRTWKGLGSDFDIQYDDEDPSDSTLVVEGRKGIARGYTVGDSIEKH</sequence>
<proteinExistence type="inferred from homology"/>